<comment type="function">
    <text evidence="1">Succinyl-CoA synthetase functions in the citric acid cycle (TCA), coupling the hydrolysis of succinyl-CoA to the synthesis of either ATP or GTP and thus represents the only step of substrate-level phosphorylation in the TCA. The beta subunit provides nucleotide specificity of the enzyme and binds the substrate succinate, while the binding sites for coenzyme A and phosphate are found in the alpha subunit.</text>
</comment>
<comment type="catalytic activity">
    <reaction evidence="1">
        <text>succinate + ATP + CoA = succinyl-CoA + ADP + phosphate</text>
        <dbReference type="Rhea" id="RHEA:17661"/>
        <dbReference type="ChEBI" id="CHEBI:30031"/>
        <dbReference type="ChEBI" id="CHEBI:30616"/>
        <dbReference type="ChEBI" id="CHEBI:43474"/>
        <dbReference type="ChEBI" id="CHEBI:57287"/>
        <dbReference type="ChEBI" id="CHEBI:57292"/>
        <dbReference type="ChEBI" id="CHEBI:456216"/>
        <dbReference type="EC" id="6.2.1.5"/>
    </reaction>
    <physiologicalReaction direction="right-to-left" evidence="1">
        <dbReference type="Rhea" id="RHEA:17663"/>
    </physiologicalReaction>
</comment>
<comment type="catalytic activity">
    <reaction evidence="1">
        <text>GTP + succinate + CoA = succinyl-CoA + GDP + phosphate</text>
        <dbReference type="Rhea" id="RHEA:22120"/>
        <dbReference type="ChEBI" id="CHEBI:30031"/>
        <dbReference type="ChEBI" id="CHEBI:37565"/>
        <dbReference type="ChEBI" id="CHEBI:43474"/>
        <dbReference type="ChEBI" id="CHEBI:57287"/>
        <dbReference type="ChEBI" id="CHEBI:57292"/>
        <dbReference type="ChEBI" id="CHEBI:58189"/>
    </reaction>
    <physiologicalReaction direction="right-to-left" evidence="1">
        <dbReference type="Rhea" id="RHEA:22122"/>
    </physiologicalReaction>
</comment>
<comment type="cofactor">
    <cofactor evidence="1">
        <name>Mg(2+)</name>
        <dbReference type="ChEBI" id="CHEBI:18420"/>
    </cofactor>
    <text evidence="1">Binds 1 Mg(2+) ion per subunit.</text>
</comment>
<comment type="pathway">
    <text evidence="1">Carbohydrate metabolism; tricarboxylic acid cycle; succinate from succinyl-CoA (ligase route): step 1/1.</text>
</comment>
<comment type="subunit">
    <text evidence="1">Heterotetramer of two alpha and two beta subunits.</text>
</comment>
<comment type="similarity">
    <text evidence="1">Belongs to the succinate/malate CoA ligase beta subunit family.</text>
</comment>
<name>SUCC_PHEZH</name>
<dbReference type="EC" id="6.2.1.5" evidence="1"/>
<dbReference type="EMBL" id="CP000747">
    <property type="protein sequence ID" value="ACG76572.1"/>
    <property type="molecule type" value="Genomic_DNA"/>
</dbReference>
<dbReference type="RefSeq" id="WP_012520720.1">
    <property type="nucleotide sequence ID" value="NC_011144.1"/>
</dbReference>
<dbReference type="SMR" id="B4RCH3"/>
<dbReference type="STRING" id="450851.PHZ_c0158"/>
<dbReference type="KEGG" id="pzu:PHZ_c0158"/>
<dbReference type="eggNOG" id="COG0045">
    <property type="taxonomic scope" value="Bacteria"/>
</dbReference>
<dbReference type="HOGENOM" id="CLU_037430_0_2_5"/>
<dbReference type="OrthoDB" id="9802602at2"/>
<dbReference type="UniPathway" id="UPA00223">
    <property type="reaction ID" value="UER00999"/>
</dbReference>
<dbReference type="Proteomes" id="UP000001868">
    <property type="component" value="Chromosome"/>
</dbReference>
<dbReference type="GO" id="GO:0005829">
    <property type="term" value="C:cytosol"/>
    <property type="evidence" value="ECO:0007669"/>
    <property type="project" value="TreeGrafter"/>
</dbReference>
<dbReference type="GO" id="GO:0042709">
    <property type="term" value="C:succinate-CoA ligase complex"/>
    <property type="evidence" value="ECO:0007669"/>
    <property type="project" value="TreeGrafter"/>
</dbReference>
<dbReference type="GO" id="GO:0005524">
    <property type="term" value="F:ATP binding"/>
    <property type="evidence" value="ECO:0007669"/>
    <property type="project" value="UniProtKB-UniRule"/>
</dbReference>
<dbReference type="GO" id="GO:0000287">
    <property type="term" value="F:magnesium ion binding"/>
    <property type="evidence" value="ECO:0007669"/>
    <property type="project" value="UniProtKB-UniRule"/>
</dbReference>
<dbReference type="GO" id="GO:0004775">
    <property type="term" value="F:succinate-CoA ligase (ADP-forming) activity"/>
    <property type="evidence" value="ECO:0007669"/>
    <property type="project" value="UniProtKB-UniRule"/>
</dbReference>
<dbReference type="GO" id="GO:0004776">
    <property type="term" value="F:succinate-CoA ligase (GDP-forming) activity"/>
    <property type="evidence" value="ECO:0007669"/>
    <property type="project" value="RHEA"/>
</dbReference>
<dbReference type="GO" id="GO:0006104">
    <property type="term" value="P:succinyl-CoA metabolic process"/>
    <property type="evidence" value="ECO:0007669"/>
    <property type="project" value="TreeGrafter"/>
</dbReference>
<dbReference type="GO" id="GO:0006099">
    <property type="term" value="P:tricarboxylic acid cycle"/>
    <property type="evidence" value="ECO:0007669"/>
    <property type="project" value="UniProtKB-UniRule"/>
</dbReference>
<dbReference type="FunFam" id="3.30.1490.20:FF:000002">
    <property type="entry name" value="Succinate--CoA ligase [ADP-forming] subunit beta"/>
    <property type="match status" value="1"/>
</dbReference>
<dbReference type="FunFam" id="3.30.470.20:FF:000002">
    <property type="entry name" value="Succinate--CoA ligase [ADP-forming] subunit beta"/>
    <property type="match status" value="1"/>
</dbReference>
<dbReference type="FunFam" id="3.40.50.261:FF:000001">
    <property type="entry name" value="Succinate--CoA ligase [ADP-forming] subunit beta"/>
    <property type="match status" value="1"/>
</dbReference>
<dbReference type="Gene3D" id="3.30.1490.20">
    <property type="entry name" value="ATP-grasp fold, A domain"/>
    <property type="match status" value="1"/>
</dbReference>
<dbReference type="Gene3D" id="3.30.470.20">
    <property type="entry name" value="ATP-grasp fold, B domain"/>
    <property type="match status" value="1"/>
</dbReference>
<dbReference type="Gene3D" id="3.40.50.261">
    <property type="entry name" value="Succinyl-CoA synthetase domains"/>
    <property type="match status" value="1"/>
</dbReference>
<dbReference type="HAMAP" id="MF_00558">
    <property type="entry name" value="Succ_CoA_beta"/>
    <property type="match status" value="1"/>
</dbReference>
<dbReference type="InterPro" id="IPR011761">
    <property type="entry name" value="ATP-grasp"/>
</dbReference>
<dbReference type="InterPro" id="IPR013650">
    <property type="entry name" value="ATP-grasp_succ-CoA_synth-type"/>
</dbReference>
<dbReference type="InterPro" id="IPR013815">
    <property type="entry name" value="ATP_grasp_subdomain_1"/>
</dbReference>
<dbReference type="InterPro" id="IPR017866">
    <property type="entry name" value="Succ-CoA_synthase_bsu_CS"/>
</dbReference>
<dbReference type="InterPro" id="IPR005811">
    <property type="entry name" value="SUCC_ACL_C"/>
</dbReference>
<dbReference type="InterPro" id="IPR005809">
    <property type="entry name" value="Succ_CoA_ligase-like_bsu"/>
</dbReference>
<dbReference type="InterPro" id="IPR016102">
    <property type="entry name" value="Succinyl-CoA_synth-like"/>
</dbReference>
<dbReference type="NCBIfam" id="NF001913">
    <property type="entry name" value="PRK00696.1"/>
    <property type="match status" value="1"/>
</dbReference>
<dbReference type="NCBIfam" id="TIGR01016">
    <property type="entry name" value="sucCoAbeta"/>
    <property type="match status" value="1"/>
</dbReference>
<dbReference type="PANTHER" id="PTHR11815:SF10">
    <property type="entry name" value="SUCCINATE--COA LIGASE [GDP-FORMING] SUBUNIT BETA, MITOCHONDRIAL"/>
    <property type="match status" value="1"/>
</dbReference>
<dbReference type="PANTHER" id="PTHR11815">
    <property type="entry name" value="SUCCINYL-COA SYNTHETASE BETA CHAIN"/>
    <property type="match status" value="1"/>
</dbReference>
<dbReference type="Pfam" id="PF08442">
    <property type="entry name" value="ATP-grasp_2"/>
    <property type="match status" value="1"/>
</dbReference>
<dbReference type="Pfam" id="PF00549">
    <property type="entry name" value="Ligase_CoA"/>
    <property type="match status" value="1"/>
</dbReference>
<dbReference type="PIRSF" id="PIRSF001554">
    <property type="entry name" value="SucCS_beta"/>
    <property type="match status" value="1"/>
</dbReference>
<dbReference type="SUPFAM" id="SSF56059">
    <property type="entry name" value="Glutathione synthetase ATP-binding domain-like"/>
    <property type="match status" value="1"/>
</dbReference>
<dbReference type="SUPFAM" id="SSF52210">
    <property type="entry name" value="Succinyl-CoA synthetase domains"/>
    <property type="match status" value="1"/>
</dbReference>
<dbReference type="PROSITE" id="PS50975">
    <property type="entry name" value="ATP_GRASP"/>
    <property type="match status" value="1"/>
</dbReference>
<dbReference type="PROSITE" id="PS01217">
    <property type="entry name" value="SUCCINYL_COA_LIG_3"/>
    <property type="match status" value="1"/>
</dbReference>
<evidence type="ECO:0000255" key="1">
    <source>
        <dbReference type="HAMAP-Rule" id="MF_00558"/>
    </source>
</evidence>
<reference key="1">
    <citation type="journal article" date="2008" name="BMC Genomics">
        <title>Complete genome of Phenylobacterium zucineum - a novel facultative intracellular bacterium isolated from human erythroleukemia cell line K562.</title>
        <authorList>
            <person name="Luo Y."/>
            <person name="Xu X."/>
            <person name="Ding Z."/>
            <person name="Liu Z."/>
            <person name="Zhang B."/>
            <person name="Yan Z."/>
            <person name="Sun J."/>
            <person name="Hu S."/>
            <person name="Hu X."/>
        </authorList>
    </citation>
    <scope>NUCLEOTIDE SEQUENCE [LARGE SCALE GENOMIC DNA]</scope>
    <source>
        <strain>HLK1</strain>
    </source>
</reference>
<accession>B4RCH3</accession>
<organism>
    <name type="scientific">Phenylobacterium zucineum (strain HLK1)</name>
    <dbReference type="NCBI Taxonomy" id="450851"/>
    <lineage>
        <taxon>Bacteria</taxon>
        <taxon>Pseudomonadati</taxon>
        <taxon>Pseudomonadota</taxon>
        <taxon>Alphaproteobacteria</taxon>
        <taxon>Caulobacterales</taxon>
        <taxon>Caulobacteraceae</taxon>
        <taxon>Phenylobacterium</taxon>
    </lineage>
</organism>
<proteinExistence type="inferred from homology"/>
<feature type="chain" id="PRO_1000129207" description="Succinate--CoA ligase [ADP-forming] subunit beta">
    <location>
        <begin position="1"/>
        <end position="399"/>
    </location>
</feature>
<feature type="domain" description="ATP-grasp" evidence="1">
    <location>
        <begin position="9"/>
        <end position="254"/>
    </location>
</feature>
<feature type="binding site" evidence="1">
    <location>
        <position position="46"/>
    </location>
    <ligand>
        <name>ATP</name>
        <dbReference type="ChEBI" id="CHEBI:30616"/>
    </ligand>
</feature>
<feature type="binding site" evidence="1">
    <location>
        <begin position="53"/>
        <end position="55"/>
    </location>
    <ligand>
        <name>ATP</name>
        <dbReference type="ChEBI" id="CHEBI:30616"/>
    </ligand>
</feature>
<feature type="binding site" evidence="1">
    <location>
        <position position="109"/>
    </location>
    <ligand>
        <name>ATP</name>
        <dbReference type="ChEBI" id="CHEBI:30616"/>
    </ligand>
</feature>
<feature type="binding site" evidence="1">
    <location>
        <position position="112"/>
    </location>
    <ligand>
        <name>ATP</name>
        <dbReference type="ChEBI" id="CHEBI:30616"/>
    </ligand>
</feature>
<feature type="binding site" evidence="1">
    <location>
        <position position="117"/>
    </location>
    <ligand>
        <name>ATP</name>
        <dbReference type="ChEBI" id="CHEBI:30616"/>
    </ligand>
</feature>
<feature type="binding site" evidence="1">
    <location>
        <position position="209"/>
    </location>
    <ligand>
        <name>Mg(2+)</name>
        <dbReference type="ChEBI" id="CHEBI:18420"/>
    </ligand>
</feature>
<feature type="binding site" evidence="1">
    <location>
        <position position="223"/>
    </location>
    <ligand>
        <name>Mg(2+)</name>
        <dbReference type="ChEBI" id="CHEBI:18420"/>
    </ligand>
</feature>
<feature type="binding site" evidence="1">
    <location>
        <position position="274"/>
    </location>
    <ligand>
        <name>substrate</name>
        <note>ligand shared with subunit alpha</note>
    </ligand>
</feature>
<feature type="binding site" evidence="1">
    <location>
        <begin position="331"/>
        <end position="333"/>
    </location>
    <ligand>
        <name>substrate</name>
        <note>ligand shared with subunit alpha</note>
    </ligand>
</feature>
<keyword id="KW-0067">ATP-binding</keyword>
<keyword id="KW-0436">Ligase</keyword>
<keyword id="KW-0460">Magnesium</keyword>
<keyword id="KW-0479">Metal-binding</keyword>
<keyword id="KW-0547">Nucleotide-binding</keyword>
<keyword id="KW-1185">Reference proteome</keyword>
<keyword id="KW-0816">Tricarboxylic acid cycle</keyword>
<protein>
    <recommendedName>
        <fullName evidence="1">Succinate--CoA ligase [ADP-forming] subunit beta</fullName>
        <ecNumber evidence="1">6.2.1.5</ecNumber>
    </recommendedName>
    <alternativeName>
        <fullName evidence="1">Succinyl-CoA synthetase subunit beta</fullName>
        <shortName evidence="1">SCS-beta</shortName>
    </alternativeName>
</protein>
<gene>
    <name evidence="1" type="primary">sucC</name>
    <name type="ordered locus">PHZ_c0158</name>
</gene>
<sequence>MNIHEHQAKAVLAEFGVAVPRGYPAFSVDEAVQAAEKLGGPVFVVKSQIHAGGRGKGRFEGLGPDAKGGVRVVKSVDEVKANAEEMLGRVLVTHQTGAAGKQVNRLYIEEGAQIAKEFYLSLLVDRETSWVSVVASTEGGMDIEEVAHATPEKIVTFSIDPATGVFPHHGRHLAKALGLTGGLAKEAATLLNQLYAAFLAKDMSMLEINPLIVTGDDHLRVLDAKVSFDSNALFRHADVVALRDESEEDPKEIEASKYDLSYIALDGEIGCMVNGAGLAMATMDIIKLYGAEPANFLDVGGGASKEKVTAAFKIITADPNVKGILVNIFGGIMRCDIIAEGVVAAVKEVGLKVPLVVRLEGTNVDLGKKIINESGLNVIAANDLSDGAEKIVKAVRGAA</sequence>